<name>HSP7Q_ARATH</name>
<organism>
    <name type="scientific">Arabidopsis thaliana</name>
    <name type="common">Mouse-ear cress</name>
    <dbReference type="NCBI Taxonomy" id="3702"/>
    <lineage>
        <taxon>Eukaryota</taxon>
        <taxon>Viridiplantae</taxon>
        <taxon>Streptophyta</taxon>
        <taxon>Embryophyta</taxon>
        <taxon>Tracheophyta</taxon>
        <taxon>Spermatophyta</taxon>
        <taxon>Magnoliopsida</taxon>
        <taxon>eudicotyledons</taxon>
        <taxon>Gunneridae</taxon>
        <taxon>Pentapetalae</taxon>
        <taxon>rosids</taxon>
        <taxon>malvids</taxon>
        <taxon>Brassicales</taxon>
        <taxon>Brassicaceae</taxon>
        <taxon>Camelineae</taxon>
        <taxon>Arabidopsis</taxon>
    </lineage>
</organism>
<feature type="chain" id="PRO_0000415434" description="Heat shock 70 kDa protein 16">
    <location>
        <begin position="1"/>
        <end position="763"/>
    </location>
</feature>
<feature type="region of interest" description="Disordered" evidence="2">
    <location>
        <begin position="509"/>
        <end position="529"/>
    </location>
</feature>
<feature type="region of interest" description="Disordered" evidence="2">
    <location>
        <begin position="701"/>
        <end position="763"/>
    </location>
</feature>
<feature type="compositionally biased region" description="Basic and acidic residues" evidence="2">
    <location>
        <begin position="701"/>
        <end position="714"/>
    </location>
</feature>
<feature type="modified residue" description="Phosphoserine" evidence="1">
    <location>
        <position position="528"/>
    </location>
</feature>
<feature type="sequence conflict" description="In Ref. 3; BX817726." evidence="3" ref="3">
    <original>S</original>
    <variation>F</variation>
    <location>
        <position position="708"/>
    </location>
</feature>
<feature type="sequence conflict" description="In Ref. 3; BX817726." evidence="3" ref="3">
    <original>C</original>
    <variation>S</variation>
    <location>
        <position position="733"/>
    </location>
</feature>
<protein>
    <recommendedName>
        <fullName>Heat shock 70 kDa protein 16</fullName>
    </recommendedName>
    <alternativeName>
        <fullName>Heat shock protein 70-16</fullName>
        <shortName>AtHsp70-16</shortName>
    </alternativeName>
</protein>
<accession>Q9SAB1</accession>
<evidence type="ECO:0000250" key="1">
    <source>
        <dbReference type="UniProtKB" id="F4HQD4"/>
    </source>
</evidence>
<evidence type="ECO:0000256" key="2">
    <source>
        <dbReference type="SAM" id="MobiDB-lite"/>
    </source>
</evidence>
<evidence type="ECO:0000305" key="3"/>
<proteinExistence type="evidence at transcript level"/>
<comment type="similarity">
    <text evidence="3">Belongs to the heat shock protein 70 (TC 1.A.33) family. HSP110/SSE subfamily.</text>
</comment>
<keyword id="KW-0067">ATP-binding</keyword>
<keyword id="KW-0143">Chaperone</keyword>
<keyword id="KW-0547">Nucleotide-binding</keyword>
<keyword id="KW-0597">Phosphoprotein</keyword>
<keyword id="KW-1185">Reference proteome</keyword>
<keyword id="KW-0346">Stress response</keyword>
<gene>
    <name type="primary">HSP70-16</name>
    <name type="ordered locus">At1g11660</name>
    <name type="ORF">F25C20.19</name>
</gene>
<dbReference type="EMBL" id="AC007296">
    <property type="protein sequence ID" value="AAD30257.1"/>
    <property type="molecule type" value="Genomic_DNA"/>
</dbReference>
<dbReference type="EMBL" id="CP002684">
    <property type="protein sequence ID" value="AEE28767.1"/>
    <property type="molecule type" value="Genomic_DNA"/>
</dbReference>
<dbReference type="EMBL" id="CP002684">
    <property type="protein sequence ID" value="ANM59793.1"/>
    <property type="molecule type" value="Genomic_DNA"/>
</dbReference>
<dbReference type="EMBL" id="CP002684">
    <property type="protein sequence ID" value="ANM59795.1"/>
    <property type="molecule type" value="Genomic_DNA"/>
</dbReference>
<dbReference type="EMBL" id="BX817726">
    <property type="status" value="NOT_ANNOTATED_CDS"/>
    <property type="molecule type" value="mRNA"/>
</dbReference>
<dbReference type="PIR" id="B86250">
    <property type="entry name" value="B86250"/>
</dbReference>
<dbReference type="RefSeq" id="NP_001322125.1">
    <property type="nucleotide sequence ID" value="NM_001332001.1"/>
</dbReference>
<dbReference type="RefSeq" id="NP_001322127.1">
    <property type="nucleotide sequence ID" value="NM_001332000.1"/>
</dbReference>
<dbReference type="RefSeq" id="NP_172631.2">
    <property type="nucleotide sequence ID" value="NM_101038.5"/>
</dbReference>
<dbReference type="SMR" id="Q9SAB1"/>
<dbReference type="BioGRID" id="22950">
    <property type="interactions" value="8"/>
</dbReference>
<dbReference type="FunCoup" id="Q9SAB1">
    <property type="interactions" value="4785"/>
</dbReference>
<dbReference type="STRING" id="3702.Q9SAB1"/>
<dbReference type="iPTMnet" id="Q9SAB1"/>
<dbReference type="PaxDb" id="3702-AT1G11660.1"/>
<dbReference type="ProteomicsDB" id="232112"/>
<dbReference type="EnsemblPlants" id="AT1G11660.1">
    <property type="protein sequence ID" value="AT1G11660.1"/>
    <property type="gene ID" value="AT1G11660"/>
</dbReference>
<dbReference type="EnsemblPlants" id="AT1G11660.3">
    <property type="protein sequence ID" value="AT1G11660.3"/>
    <property type="gene ID" value="AT1G11660"/>
</dbReference>
<dbReference type="EnsemblPlants" id="AT1G11660.4">
    <property type="protein sequence ID" value="AT1G11660.4"/>
    <property type="gene ID" value="AT1G11660"/>
</dbReference>
<dbReference type="GeneID" id="837710"/>
<dbReference type="Gramene" id="AT1G11660.1">
    <property type="protein sequence ID" value="AT1G11660.1"/>
    <property type="gene ID" value="AT1G11660"/>
</dbReference>
<dbReference type="Gramene" id="AT1G11660.3">
    <property type="protein sequence ID" value="AT1G11660.3"/>
    <property type="gene ID" value="AT1G11660"/>
</dbReference>
<dbReference type="Gramene" id="AT1G11660.4">
    <property type="protein sequence ID" value="AT1G11660.4"/>
    <property type="gene ID" value="AT1G11660"/>
</dbReference>
<dbReference type="KEGG" id="ath:AT1G11660"/>
<dbReference type="Araport" id="AT1G11660"/>
<dbReference type="TAIR" id="AT1G11660">
    <property type="gene designation" value="HSP70-16"/>
</dbReference>
<dbReference type="eggNOG" id="KOG0103">
    <property type="taxonomic scope" value="Eukaryota"/>
</dbReference>
<dbReference type="HOGENOM" id="CLU_005965_5_1_1"/>
<dbReference type="InParanoid" id="Q9SAB1"/>
<dbReference type="OMA" id="EYRMSAD"/>
<dbReference type="OrthoDB" id="434160at2759"/>
<dbReference type="PhylomeDB" id="Q9SAB1"/>
<dbReference type="PRO" id="PR:Q9SAB1"/>
<dbReference type="Proteomes" id="UP000006548">
    <property type="component" value="Chromosome 1"/>
</dbReference>
<dbReference type="ExpressionAtlas" id="Q9SAB1">
    <property type="expression patterns" value="baseline and differential"/>
</dbReference>
<dbReference type="GO" id="GO:0005524">
    <property type="term" value="F:ATP binding"/>
    <property type="evidence" value="ECO:0007669"/>
    <property type="project" value="UniProtKB-KW"/>
</dbReference>
<dbReference type="GO" id="GO:0140662">
    <property type="term" value="F:ATP-dependent protein folding chaperone"/>
    <property type="evidence" value="ECO:0007669"/>
    <property type="project" value="InterPro"/>
</dbReference>
<dbReference type="CDD" id="cd24095">
    <property type="entry name" value="ASKHA_NBD_HSP70_AtHsp70-14-like"/>
    <property type="match status" value="1"/>
</dbReference>
<dbReference type="FunFam" id="2.60.34.10:FF:000034">
    <property type="entry name" value="Heat shock 70 kDa protein 16 isoform A"/>
    <property type="match status" value="1"/>
</dbReference>
<dbReference type="FunFam" id="1.20.1270.10:FF:000002">
    <property type="entry name" value="Heat shock 70 kDa protein 4"/>
    <property type="match status" value="1"/>
</dbReference>
<dbReference type="FunFam" id="3.30.30.30:FF:000002">
    <property type="entry name" value="Heat shock 70 kDa protein 4"/>
    <property type="match status" value="1"/>
</dbReference>
<dbReference type="FunFam" id="3.30.420.40:FF:000171">
    <property type="entry name" value="Heat shock 70 kDa protein 4"/>
    <property type="match status" value="2"/>
</dbReference>
<dbReference type="FunFam" id="3.90.640.10:FF:000004">
    <property type="entry name" value="Heat shock 70 kDa protein 4"/>
    <property type="match status" value="1"/>
</dbReference>
<dbReference type="Gene3D" id="1.20.1270.10">
    <property type="match status" value="1"/>
</dbReference>
<dbReference type="Gene3D" id="3.30.30.30">
    <property type="match status" value="1"/>
</dbReference>
<dbReference type="Gene3D" id="3.30.420.40">
    <property type="match status" value="2"/>
</dbReference>
<dbReference type="Gene3D" id="3.90.640.10">
    <property type="entry name" value="Actin, Chain A, domain 4"/>
    <property type="match status" value="1"/>
</dbReference>
<dbReference type="Gene3D" id="2.60.34.10">
    <property type="entry name" value="Substrate Binding Domain Of DNAk, Chain A, domain 1"/>
    <property type="match status" value="1"/>
</dbReference>
<dbReference type="InterPro" id="IPR043129">
    <property type="entry name" value="ATPase_NBD"/>
</dbReference>
<dbReference type="InterPro" id="IPR029048">
    <property type="entry name" value="HSP70_C_sf"/>
</dbReference>
<dbReference type="InterPro" id="IPR029047">
    <property type="entry name" value="HSP70_peptide-bd_sf"/>
</dbReference>
<dbReference type="InterPro" id="IPR013126">
    <property type="entry name" value="Hsp_70_fam"/>
</dbReference>
<dbReference type="PANTHER" id="PTHR45639:SF15">
    <property type="entry name" value="HEAT SHOCK 70 KDA PROTEIN 16"/>
    <property type="match status" value="1"/>
</dbReference>
<dbReference type="PANTHER" id="PTHR45639">
    <property type="entry name" value="HSC70CB, ISOFORM G-RELATED"/>
    <property type="match status" value="1"/>
</dbReference>
<dbReference type="Pfam" id="PF00012">
    <property type="entry name" value="HSP70"/>
    <property type="match status" value="1"/>
</dbReference>
<dbReference type="PRINTS" id="PR00301">
    <property type="entry name" value="HEATSHOCK70"/>
</dbReference>
<dbReference type="SUPFAM" id="SSF53067">
    <property type="entry name" value="Actin-like ATPase domain"/>
    <property type="match status" value="2"/>
</dbReference>
<dbReference type="SUPFAM" id="SSF100934">
    <property type="entry name" value="Heat shock protein 70kD (HSP70), C-terminal subdomain"/>
    <property type="match status" value="1"/>
</dbReference>
<dbReference type="SUPFAM" id="SSF100920">
    <property type="entry name" value="Heat shock protein 70kD (HSP70), peptide-binding domain"/>
    <property type="match status" value="1"/>
</dbReference>
<reference key="1">
    <citation type="journal article" date="2000" name="Nature">
        <title>Sequence and analysis of chromosome 1 of the plant Arabidopsis thaliana.</title>
        <authorList>
            <person name="Theologis A."/>
            <person name="Ecker J.R."/>
            <person name="Palm C.J."/>
            <person name="Federspiel N.A."/>
            <person name="Kaul S."/>
            <person name="White O."/>
            <person name="Alonso J."/>
            <person name="Altafi H."/>
            <person name="Araujo R."/>
            <person name="Bowman C.L."/>
            <person name="Brooks S.Y."/>
            <person name="Buehler E."/>
            <person name="Chan A."/>
            <person name="Chao Q."/>
            <person name="Chen H."/>
            <person name="Cheuk R.F."/>
            <person name="Chin C.W."/>
            <person name="Chung M.K."/>
            <person name="Conn L."/>
            <person name="Conway A.B."/>
            <person name="Conway A.R."/>
            <person name="Creasy T.H."/>
            <person name="Dewar K."/>
            <person name="Dunn P."/>
            <person name="Etgu P."/>
            <person name="Feldblyum T.V."/>
            <person name="Feng J.-D."/>
            <person name="Fong B."/>
            <person name="Fujii C.Y."/>
            <person name="Gill J.E."/>
            <person name="Goldsmith A.D."/>
            <person name="Haas B."/>
            <person name="Hansen N.F."/>
            <person name="Hughes B."/>
            <person name="Huizar L."/>
            <person name="Hunter J.L."/>
            <person name="Jenkins J."/>
            <person name="Johnson-Hopson C."/>
            <person name="Khan S."/>
            <person name="Khaykin E."/>
            <person name="Kim C.J."/>
            <person name="Koo H.L."/>
            <person name="Kremenetskaia I."/>
            <person name="Kurtz D.B."/>
            <person name="Kwan A."/>
            <person name="Lam B."/>
            <person name="Langin-Hooper S."/>
            <person name="Lee A."/>
            <person name="Lee J.M."/>
            <person name="Lenz C.A."/>
            <person name="Li J.H."/>
            <person name="Li Y.-P."/>
            <person name="Lin X."/>
            <person name="Liu S.X."/>
            <person name="Liu Z.A."/>
            <person name="Luros J.S."/>
            <person name="Maiti R."/>
            <person name="Marziali A."/>
            <person name="Militscher J."/>
            <person name="Miranda M."/>
            <person name="Nguyen M."/>
            <person name="Nierman W.C."/>
            <person name="Osborne B.I."/>
            <person name="Pai G."/>
            <person name="Peterson J."/>
            <person name="Pham P.K."/>
            <person name="Rizzo M."/>
            <person name="Rooney T."/>
            <person name="Rowley D."/>
            <person name="Sakano H."/>
            <person name="Salzberg S.L."/>
            <person name="Schwartz J.R."/>
            <person name="Shinn P."/>
            <person name="Southwick A.M."/>
            <person name="Sun H."/>
            <person name="Tallon L.J."/>
            <person name="Tambunga G."/>
            <person name="Toriumi M.J."/>
            <person name="Town C.D."/>
            <person name="Utterback T."/>
            <person name="Van Aken S."/>
            <person name="Vaysberg M."/>
            <person name="Vysotskaia V.S."/>
            <person name="Walker M."/>
            <person name="Wu D."/>
            <person name="Yu G."/>
            <person name="Fraser C.M."/>
            <person name="Venter J.C."/>
            <person name="Davis R.W."/>
        </authorList>
    </citation>
    <scope>NUCLEOTIDE SEQUENCE [LARGE SCALE GENOMIC DNA]</scope>
    <source>
        <strain>cv. Columbia</strain>
    </source>
</reference>
<reference key="2">
    <citation type="journal article" date="2017" name="Plant J.">
        <title>Araport11: a complete reannotation of the Arabidopsis thaliana reference genome.</title>
        <authorList>
            <person name="Cheng C.Y."/>
            <person name="Krishnakumar V."/>
            <person name="Chan A.P."/>
            <person name="Thibaud-Nissen F."/>
            <person name="Schobel S."/>
            <person name="Town C.D."/>
        </authorList>
    </citation>
    <scope>GENOME REANNOTATION</scope>
    <source>
        <strain>cv. Columbia</strain>
    </source>
</reference>
<reference key="3">
    <citation type="journal article" date="2004" name="Genome Res.">
        <title>Whole genome sequence comparisons and 'full-length' cDNA sequences: a combined approach to evaluate and improve Arabidopsis genome annotation.</title>
        <authorList>
            <person name="Castelli V."/>
            <person name="Aury J.-M."/>
            <person name="Jaillon O."/>
            <person name="Wincker P."/>
            <person name="Clepet C."/>
            <person name="Menard M."/>
            <person name="Cruaud C."/>
            <person name="Quetier F."/>
            <person name="Scarpelli C."/>
            <person name="Schaechter V."/>
            <person name="Temple G."/>
            <person name="Caboche M."/>
            <person name="Weissenbach J."/>
            <person name="Salanoubat M."/>
        </authorList>
    </citation>
    <scope>NUCLEOTIDE SEQUENCE [LARGE SCALE MRNA] OF 675-763</scope>
    <source>
        <strain>cv. Columbia</strain>
    </source>
</reference>
<reference key="4">
    <citation type="journal article" date="2001" name="Cell Stress Chaperones">
        <title>Genomic analysis of the Hsp70 superfamily in Arabidopsis thaliana.</title>
        <authorList>
            <person name="Lin B.L."/>
            <person name="Wang J.S."/>
            <person name="Liu H.C."/>
            <person name="Chen R.W."/>
            <person name="Meyer Y."/>
            <person name="Barakat A."/>
            <person name="Delseny M."/>
        </authorList>
    </citation>
    <scope>GENE FAMILY</scope>
    <scope>NOMENCLATURE</scope>
</reference>
<sequence>MSVVGFDVGNENCVIAVAKQRGIDVLLNDESNRENPAMVSFGEKQRFMGAAAAASATMHPKSTISQLKRLIGRKFREPDVQNDLRLFPFETSEDSDGGIQIRLRYMGEIQSFSPVQILGMLLSHLKQIAEKSLKTPVSDCVIGIPSYFTNSQRLAYLDAAAIAGLRPLRLMHDSTATALGYGIYKTDLVANSSPTYIVFIDIGHCDTQVCVASFESGSMRVRSHAFDRNLGGRDFDEVLFNHFALEFKEKYNIDVYTNTKACVRLRASCEKVKKVLSANAEAQLNIECLMEEKDVRSFIKREEFEQLSAGLLERLIVPCQKALADSGLSLDQIHSVELVGSGSRIPAISKMLSSLFKRELGRTVNASECVARGCALQCAMLSPVFRVRDYEVQDSYPFAIGFSSDKGPINTPSNELLFPKGQIFPSVKVLTLHRENTFQLEAFYANHNELSPDIPTQISSFMIGPFHISHGEAARVKVRVQLNLHGIVTIDSATLIEYHKENITSEEMISEENHQSSAMKDGSLDPSSGSIGNEPKAIKRMEIPVVANVSGALTKDELSEAKQRENSLVEQDLKMESTKDKKNALESFVYEMRDKMLNTYRNTATESERECIARNLQETEEWLYEDGDDESENAYIEKLNDVKKLIDPIENRFKDGEERVQASKDLLKTIADNRMAAESLPPPRKNAVLDECHKAERWLHEKTTEQESLPKDANPELQSAEIRRKADALNATCKYIGKSNSPPAKPEHNGSYGSRKSDDMELD</sequence>